<keyword id="KW-1003">Cell membrane</keyword>
<keyword id="KW-0868">Chloride</keyword>
<keyword id="KW-0869">Chloride channel</keyword>
<keyword id="KW-0963">Cytoplasm</keyword>
<keyword id="KW-1015">Disulfide bond</keyword>
<keyword id="KW-0272">Extracellular matrix</keyword>
<keyword id="KW-0407">Ion channel</keyword>
<keyword id="KW-0406">Ion transport</keyword>
<keyword id="KW-0472">Membrane</keyword>
<keyword id="KW-0539">Nucleus</keyword>
<keyword id="KW-0560">Oxidoreductase</keyword>
<keyword id="KW-0597">Phosphoprotein</keyword>
<keyword id="KW-1185">Reference proteome</keyword>
<keyword id="KW-0964">Secreted</keyword>
<keyword id="KW-0812">Transmembrane</keyword>
<keyword id="KW-1133">Transmembrane helix</keyword>
<keyword id="KW-0813">Transport</keyword>
<keyword id="KW-0851">Voltage-gated channel</keyword>
<comment type="function">
    <text evidence="2">In the soluble state, catalyzes glutaredoxin-like thiol disulfide exchange reactions with reduced glutathione as electron donor. Reduced in a glutathione-dependent way and secreted into the extracellular matrix where it activates TGM2 and promotes blood vessel growth during tissue remodeling as occurs in tumorigenesis. Can reduce specific cysteines in TGM2 and regulate cofactor binding (By similarity). Can insert into membranes and form outwardly rectifying chloride ion channels. May participate in cellular growth control (By similarity).</text>
</comment>
<comment type="catalytic activity">
    <reaction evidence="2">
        <text>chloride(in) = chloride(out)</text>
        <dbReference type="Rhea" id="RHEA:29823"/>
        <dbReference type="ChEBI" id="CHEBI:17996"/>
    </reaction>
</comment>
<comment type="subunit">
    <text evidence="2">Associated with the C-terminal of MAPK15.</text>
</comment>
<comment type="subcellular location">
    <subcellularLocation>
        <location evidence="2">Nucleus</location>
    </subcellularLocation>
    <subcellularLocation>
        <location evidence="2">Membrane</location>
        <topology evidence="2">Single-pass membrane protein</topology>
    </subcellularLocation>
    <subcellularLocation>
        <location evidence="2">Cell membrane</location>
        <topology evidence="2">Single-pass membrane protein</topology>
    </subcellularLocation>
    <subcellularLocation>
        <location evidence="2">Cytoplasm</location>
    </subcellularLocation>
    <subcellularLocation>
        <location evidence="2">Secreted</location>
        <location evidence="2">Extracellular space</location>
        <location evidence="2">Extracellular matrix</location>
    </subcellularLocation>
    <text evidence="1 2">Predominantly nuclear. Some protein was found in the cytoplasm. Exists both as soluble cytoplasmic protein and as membrane protein with probably a single transmembrane domain (By similarity). Secreted into the extracellular matrix by activated fibroblasts (By similarity).</text>
</comment>
<comment type="domain">
    <text evidence="2">The active G-site contains a dithiol Cys-X-X-Cys motif which mediates glutathione-dependent redox catalysis.</text>
</comment>
<comment type="domain">
    <text evidence="1">Members of this family may change from a globular, soluble state to a state where the N-terminal domain is inserted into the membrane and functions as a chloride channel. The redox status of the active cysteine in Cys-X-X-Cys motif likely determines the capacity to adopt a soluble or membrane-inserted state. A conformation change of the N-terminal domain is thought to expose hydrophobic surfaces that trigger membrane insertion (By similarity).</text>
</comment>
<comment type="similarity">
    <text evidence="6">Belongs to the chloride channel CLIC family.</text>
</comment>
<feature type="chain" id="PRO_0000144208" description="Chloride intracellular channel protein 3">
    <location>
        <begin position="1"/>
        <end position="237"/>
    </location>
</feature>
<feature type="transmembrane region" description="Helical" evidence="3">
    <location>
        <begin position="25"/>
        <end position="45"/>
    </location>
</feature>
<feature type="domain" description="GST N-terminal" evidence="4">
    <location>
        <begin position="13"/>
        <end position="91"/>
    </location>
</feature>
<feature type="domain" description="GST C-terminal" evidence="5">
    <location>
        <begin position="69"/>
        <end position="236"/>
    </location>
</feature>
<feature type="region of interest" description="Required for insertion into the membrane" evidence="1">
    <location>
        <begin position="1"/>
        <end position="89"/>
    </location>
</feature>
<feature type="short sequence motif" description="G-site" evidence="2">
    <location>
        <begin position="23"/>
        <end position="26"/>
    </location>
</feature>
<feature type="modified residue" description="Phosphoserine" evidence="2">
    <location>
        <position position="160"/>
    </location>
</feature>
<feature type="disulfide bond" description="In soluble form" evidence="1">
    <location>
        <begin position="23"/>
        <end position="26"/>
    </location>
</feature>
<organism>
    <name type="scientific">Mus musculus</name>
    <name type="common">Mouse</name>
    <dbReference type="NCBI Taxonomy" id="10090"/>
    <lineage>
        <taxon>Eukaryota</taxon>
        <taxon>Metazoa</taxon>
        <taxon>Chordata</taxon>
        <taxon>Craniata</taxon>
        <taxon>Vertebrata</taxon>
        <taxon>Euteleostomi</taxon>
        <taxon>Mammalia</taxon>
        <taxon>Eutheria</taxon>
        <taxon>Euarchontoglires</taxon>
        <taxon>Glires</taxon>
        <taxon>Rodentia</taxon>
        <taxon>Myomorpha</taxon>
        <taxon>Muroidea</taxon>
        <taxon>Muridae</taxon>
        <taxon>Murinae</taxon>
        <taxon>Mus</taxon>
        <taxon>Mus</taxon>
    </lineage>
</organism>
<gene>
    <name evidence="7" type="primary">Clic3</name>
</gene>
<protein>
    <recommendedName>
        <fullName>Chloride intracellular channel protein 3</fullName>
    </recommendedName>
    <alternativeName>
        <fullName evidence="2">Glutaredoxin-like oxidoreductase CLIC3</fullName>
        <ecNumber evidence="2">1.8.-.-</ecNumber>
    </alternativeName>
</protein>
<proteinExistence type="evidence at protein level"/>
<sequence>MAETTKLQLFVKASEDGESVGHCPSCQRLFMVLLLKGVPFTLTTVDTRRALDVLKDFAPGSQLPILLYDGDVKTDTLQIEEFLEETLGPPDFPSLAPRYRESNTAGNDIFHKFSAFIKNPVPTQDNALYQQLLRALTRLDSYLRAPLDHELAQEPHLRESHRRFLDGDQFTLADCSLLPKLHIVDTVCAHFRQLPIPAELSCVRRYLDSALQKKEFKYTCPHSAEILAAYQPAVHPR</sequence>
<name>CLIC3_MOUSE</name>
<accession>Q9D7P7</accession>
<reference key="1">
    <citation type="journal article" date="2005" name="Science">
        <title>The transcriptional landscape of the mammalian genome.</title>
        <authorList>
            <person name="Carninci P."/>
            <person name="Kasukawa T."/>
            <person name="Katayama S."/>
            <person name="Gough J."/>
            <person name="Frith M.C."/>
            <person name="Maeda N."/>
            <person name="Oyama R."/>
            <person name="Ravasi T."/>
            <person name="Lenhard B."/>
            <person name="Wells C."/>
            <person name="Kodzius R."/>
            <person name="Shimokawa K."/>
            <person name="Bajic V.B."/>
            <person name="Brenner S.E."/>
            <person name="Batalov S."/>
            <person name="Forrest A.R."/>
            <person name="Zavolan M."/>
            <person name="Davis M.J."/>
            <person name="Wilming L.G."/>
            <person name="Aidinis V."/>
            <person name="Allen J.E."/>
            <person name="Ambesi-Impiombato A."/>
            <person name="Apweiler R."/>
            <person name="Aturaliya R.N."/>
            <person name="Bailey T.L."/>
            <person name="Bansal M."/>
            <person name="Baxter L."/>
            <person name="Beisel K.W."/>
            <person name="Bersano T."/>
            <person name="Bono H."/>
            <person name="Chalk A.M."/>
            <person name="Chiu K.P."/>
            <person name="Choudhary V."/>
            <person name="Christoffels A."/>
            <person name="Clutterbuck D.R."/>
            <person name="Crowe M.L."/>
            <person name="Dalla E."/>
            <person name="Dalrymple B.P."/>
            <person name="de Bono B."/>
            <person name="Della Gatta G."/>
            <person name="di Bernardo D."/>
            <person name="Down T."/>
            <person name="Engstrom P."/>
            <person name="Fagiolini M."/>
            <person name="Faulkner G."/>
            <person name="Fletcher C.F."/>
            <person name="Fukushima T."/>
            <person name="Furuno M."/>
            <person name="Futaki S."/>
            <person name="Gariboldi M."/>
            <person name="Georgii-Hemming P."/>
            <person name="Gingeras T.R."/>
            <person name="Gojobori T."/>
            <person name="Green R.E."/>
            <person name="Gustincich S."/>
            <person name="Harbers M."/>
            <person name="Hayashi Y."/>
            <person name="Hensch T.K."/>
            <person name="Hirokawa N."/>
            <person name="Hill D."/>
            <person name="Huminiecki L."/>
            <person name="Iacono M."/>
            <person name="Ikeo K."/>
            <person name="Iwama A."/>
            <person name="Ishikawa T."/>
            <person name="Jakt M."/>
            <person name="Kanapin A."/>
            <person name="Katoh M."/>
            <person name="Kawasawa Y."/>
            <person name="Kelso J."/>
            <person name="Kitamura H."/>
            <person name="Kitano H."/>
            <person name="Kollias G."/>
            <person name="Krishnan S.P."/>
            <person name="Kruger A."/>
            <person name="Kummerfeld S.K."/>
            <person name="Kurochkin I.V."/>
            <person name="Lareau L.F."/>
            <person name="Lazarevic D."/>
            <person name="Lipovich L."/>
            <person name="Liu J."/>
            <person name="Liuni S."/>
            <person name="McWilliam S."/>
            <person name="Madan Babu M."/>
            <person name="Madera M."/>
            <person name="Marchionni L."/>
            <person name="Matsuda H."/>
            <person name="Matsuzawa S."/>
            <person name="Miki H."/>
            <person name="Mignone F."/>
            <person name="Miyake S."/>
            <person name="Morris K."/>
            <person name="Mottagui-Tabar S."/>
            <person name="Mulder N."/>
            <person name="Nakano N."/>
            <person name="Nakauchi H."/>
            <person name="Ng P."/>
            <person name="Nilsson R."/>
            <person name="Nishiguchi S."/>
            <person name="Nishikawa S."/>
            <person name="Nori F."/>
            <person name="Ohara O."/>
            <person name="Okazaki Y."/>
            <person name="Orlando V."/>
            <person name="Pang K.C."/>
            <person name="Pavan W.J."/>
            <person name="Pavesi G."/>
            <person name="Pesole G."/>
            <person name="Petrovsky N."/>
            <person name="Piazza S."/>
            <person name="Reed J."/>
            <person name="Reid J.F."/>
            <person name="Ring B.Z."/>
            <person name="Ringwald M."/>
            <person name="Rost B."/>
            <person name="Ruan Y."/>
            <person name="Salzberg S.L."/>
            <person name="Sandelin A."/>
            <person name="Schneider C."/>
            <person name="Schoenbach C."/>
            <person name="Sekiguchi K."/>
            <person name="Semple C.A."/>
            <person name="Seno S."/>
            <person name="Sessa L."/>
            <person name="Sheng Y."/>
            <person name="Shibata Y."/>
            <person name="Shimada H."/>
            <person name="Shimada K."/>
            <person name="Silva D."/>
            <person name="Sinclair B."/>
            <person name="Sperling S."/>
            <person name="Stupka E."/>
            <person name="Sugiura K."/>
            <person name="Sultana R."/>
            <person name="Takenaka Y."/>
            <person name="Taki K."/>
            <person name="Tammoja K."/>
            <person name="Tan S.L."/>
            <person name="Tang S."/>
            <person name="Taylor M.S."/>
            <person name="Tegner J."/>
            <person name="Teichmann S.A."/>
            <person name="Ueda H.R."/>
            <person name="van Nimwegen E."/>
            <person name="Verardo R."/>
            <person name="Wei C.L."/>
            <person name="Yagi K."/>
            <person name="Yamanishi H."/>
            <person name="Zabarovsky E."/>
            <person name="Zhu S."/>
            <person name="Zimmer A."/>
            <person name="Hide W."/>
            <person name="Bult C."/>
            <person name="Grimmond S.M."/>
            <person name="Teasdale R.D."/>
            <person name="Liu E.T."/>
            <person name="Brusic V."/>
            <person name="Quackenbush J."/>
            <person name="Wahlestedt C."/>
            <person name="Mattick J.S."/>
            <person name="Hume D.A."/>
            <person name="Kai C."/>
            <person name="Sasaki D."/>
            <person name="Tomaru Y."/>
            <person name="Fukuda S."/>
            <person name="Kanamori-Katayama M."/>
            <person name="Suzuki M."/>
            <person name="Aoki J."/>
            <person name="Arakawa T."/>
            <person name="Iida J."/>
            <person name="Imamura K."/>
            <person name="Itoh M."/>
            <person name="Kato T."/>
            <person name="Kawaji H."/>
            <person name="Kawagashira N."/>
            <person name="Kawashima T."/>
            <person name="Kojima M."/>
            <person name="Kondo S."/>
            <person name="Konno H."/>
            <person name="Nakano K."/>
            <person name="Ninomiya N."/>
            <person name="Nishio T."/>
            <person name="Okada M."/>
            <person name="Plessy C."/>
            <person name="Shibata K."/>
            <person name="Shiraki T."/>
            <person name="Suzuki S."/>
            <person name="Tagami M."/>
            <person name="Waki K."/>
            <person name="Watahiki A."/>
            <person name="Okamura-Oho Y."/>
            <person name="Suzuki H."/>
            <person name="Kawai J."/>
            <person name="Hayashizaki Y."/>
        </authorList>
    </citation>
    <scope>NUCLEOTIDE SEQUENCE [LARGE SCALE MRNA]</scope>
    <source>
        <strain>C57BL/6J</strain>
        <tissue>Tongue</tissue>
    </source>
</reference>
<reference key="2">
    <citation type="journal article" date="2010" name="Cell">
        <title>A tissue-specific atlas of mouse protein phosphorylation and expression.</title>
        <authorList>
            <person name="Huttlin E.L."/>
            <person name="Jedrychowski M.P."/>
            <person name="Elias J.E."/>
            <person name="Goswami T."/>
            <person name="Rad R."/>
            <person name="Beausoleil S.A."/>
            <person name="Villen J."/>
            <person name="Haas W."/>
            <person name="Sowa M.E."/>
            <person name="Gygi S.P."/>
        </authorList>
    </citation>
    <scope>IDENTIFICATION BY MASS SPECTROMETRY [LARGE SCALE ANALYSIS]</scope>
    <source>
        <tissue>Lung</tissue>
    </source>
</reference>
<dbReference type="EC" id="1.8.-.-" evidence="2"/>
<dbReference type="EMBL" id="AK009020">
    <property type="protein sequence ID" value="BAB26030.2"/>
    <property type="molecule type" value="mRNA"/>
</dbReference>
<dbReference type="CCDS" id="CCDS15774.1"/>
<dbReference type="RefSeq" id="NP_081361.1">
    <property type="nucleotide sequence ID" value="NM_027085.3"/>
</dbReference>
<dbReference type="SMR" id="Q9D7P7"/>
<dbReference type="FunCoup" id="Q9D7P7">
    <property type="interactions" value="1054"/>
</dbReference>
<dbReference type="STRING" id="10090.ENSMUSP00000109904"/>
<dbReference type="PhosphoSitePlus" id="Q9D7P7"/>
<dbReference type="PaxDb" id="10090-ENSMUSP00000109904"/>
<dbReference type="ProteomicsDB" id="283384"/>
<dbReference type="Antibodypedia" id="991">
    <property type="antibodies" value="235 antibodies from 31 providers"/>
</dbReference>
<dbReference type="DNASU" id="69454"/>
<dbReference type="Ensembl" id="ENSMUST00000114265.9">
    <property type="protein sequence ID" value="ENSMUSP00000109904.3"/>
    <property type="gene ID" value="ENSMUSG00000015093.16"/>
</dbReference>
<dbReference type="GeneID" id="69454"/>
<dbReference type="KEGG" id="mmu:69454"/>
<dbReference type="UCSC" id="uc008isd.1">
    <property type="organism name" value="mouse"/>
</dbReference>
<dbReference type="AGR" id="MGI:1916704"/>
<dbReference type="CTD" id="9022"/>
<dbReference type="MGI" id="MGI:1916704">
    <property type="gene designation" value="Clic3"/>
</dbReference>
<dbReference type="VEuPathDB" id="HostDB:ENSMUSG00000015093"/>
<dbReference type="eggNOG" id="KOG1422">
    <property type="taxonomic scope" value="Eukaryota"/>
</dbReference>
<dbReference type="GeneTree" id="ENSGT00940000161243"/>
<dbReference type="HOGENOM" id="CLU_061051_1_0_1"/>
<dbReference type="InParanoid" id="Q9D7P7"/>
<dbReference type="OMA" id="VQVVCQH"/>
<dbReference type="OrthoDB" id="1935530at2759"/>
<dbReference type="PhylomeDB" id="Q9D7P7"/>
<dbReference type="TreeFam" id="TF315438"/>
<dbReference type="BioGRID-ORCS" id="69454">
    <property type="hits" value="0 hits in 76 CRISPR screens"/>
</dbReference>
<dbReference type="ChiTaRS" id="Clic3">
    <property type="organism name" value="mouse"/>
</dbReference>
<dbReference type="PRO" id="PR:Q9D7P7"/>
<dbReference type="Proteomes" id="UP000000589">
    <property type="component" value="Chromosome 2"/>
</dbReference>
<dbReference type="RNAct" id="Q9D7P7">
    <property type="molecule type" value="protein"/>
</dbReference>
<dbReference type="Bgee" id="ENSMUSG00000015093">
    <property type="expression patterns" value="Expressed in lip and 95 other cell types or tissues"/>
</dbReference>
<dbReference type="ExpressionAtlas" id="Q9D7P7">
    <property type="expression patterns" value="baseline and differential"/>
</dbReference>
<dbReference type="GO" id="GO:0034707">
    <property type="term" value="C:chloride channel complex"/>
    <property type="evidence" value="ECO:0007669"/>
    <property type="project" value="UniProtKB-KW"/>
</dbReference>
<dbReference type="GO" id="GO:0005737">
    <property type="term" value="C:cytoplasm"/>
    <property type="evidence" value="ECO:0000250"/>
    <property type="project" value="UniProtKB"/>
</dbReference>
<dbReference type="GO" id="GO:0031012">
    <property type="term" value="C:extracellular matrix"/>
    <property type="evidence" value="ECO:0007669"/>
    <property type="project" value="Ensembl"/>
</dbReference>
<dbReference type="GO" id="GO:0005576">
    <property type="term" value="C:extracellular region"/>
    <property type="evidence" value="ECO:0007669"/>
    <property type="project" value="UniProtKB-KW"/>
</dbReference>
<dbReference type="GO" id="GO:0016604">
    <property type="term" value="C:nuclear body"/>
    <property type="evidence" value="ECO:0007669"/>
    <property type="project" value="Ensembl"/>
</dbReference>
<dbReference type="GO" id="GO:0005634">
    <property type="term" value="C:nucleus"/>
    <property type="evidence" value="ECO:0000250"/>
    <property type="project" value="UniProtKB"/>
</dbReference>
<dbReference type="GO" id="GO:0005886">
    <property type="term" value="C:plasma membrane"/>
    <property type="evidence" value="ECO:0007669"/>
    <property type="project" value="UniProtKB-SubCell"/>
</dbReference>
<dbReference type="GO" id="GO:0005254">
    <property type="term" value="F:chloride channel activity"/>
    <property type="evidence" value="ECO:0000250"/>
    <property type="project" value="UniProtKB"/>
</dbReference>
<dbReference type="GO" id="GO:0019153">
    <property type="term" value="F:protein-disulfide reductase (glutathione) activity"/>
    <property type="evidence" value="ECO:0007669"/>
    <property type="project" value="Ensembl"/>
</dbReference>
<dbReference type="GO" id="GO:0006821">
    <property type="term" value="P:chloride transport"/>
    <property type="evidence" value="ECO:0000250"/>
    <property type="project" value="UniProtKB"/>
</dbReference>
<dbReference type="GO" id="GO:1903672">
    <property type="term" value="P:positive regulation of sprouting angiogenesis"/>
    <property type="evidence" value="ECO:0007669"/>
    <property type="project" value="Ensembl"/>
</dbReference>
<dbReference type="CDD" id="cd10299">
    <property type="entry name" value="GST_C_CLIC3"/>
    <property type="match status" value="1"/>
</dbReference>
<dbReference type="CDD" id="cd03061">
    <property type="entry name" value="GST_N_CLIC"/>
    <property type="match status" value="1"/>
</dbReference>
<dbReference type="FunFam" id="1.20.1050.10:FF:000001">
    <property type="entry name" value="Chloride intracellular channel 2"/>
    <property type="match status" value="1"/>
</dbReference>
<dbReference type="FunFam" id="3.40.30.10:FF:000170">
    <property type="entry name" value="Chloride intracellular channel 3"/>
    <property type="match status" value="1"/>
</dbReference>
<dbReference type="Gene3D" id="1.20.1050.10">
    <property type="match status" value="1"/>
</dbReference>
<dbReference type="Gene3D" id="3.40.30.10">
    <property type="entry name" value="Glutaredoxin"/>
    <property type="match status" value="1"/>
</dbReference>
<dbReference type="InterPro" id="IPR002946">
    <property type="entry name" value="CLIC"/>
</dbReference>
<dbReference type="InterPro" id="IPR053823">
    <property type="entry name" value="CLIC_N"/>
</dbReference>
<dbReference type="InterPro" id="IPR036282">
    <property type="entry name" value="Glutathione-S-Trfase_C_sf"/>
</dbReference>
<dbReference type="InterPro" id="IPR040079">
    <property type="entry name" value="Glutathione_S-Trfase"/>
</dbReference>
<dbReference type="InterPro" id="IPR004045">
    <property type="entry name" value="Glutathione_S-Trfase_N"/>
</dbReference>
<dbReference type="InterPro" id="IPR036249">
    <property type="entry name" value="Thioredoxin-like_sf"/>
</dbReference>
<dbReference type="PANTHER" id="PTHR45476:SF7">
    <property type="entry name" value="CHLORIDE INTRACELLULAR CHANNEL 3"/>
    <property type="match status" value="1"/>
</dbReference>
<dbReference type="PANTHER" id="PTHR45476">
    <property type="entry name" value="CHLORIDE INTRACELLULAR CHANNEL PROTEIN 6-RELATED"/>
    <property type="match status" value="1"/>
</dbReference>
<dbReference type="Pfam" id="PF22441">
    <property type="entry name" value="CLIC-like_N"/>
    <property type="match status" value="1"/>
</dbReference>
<dbReference type="Pfam" id="PF13410">
    <property type="entry name" value="GST_C_2"/>
    <property type="match status" value="1"/>
</dbReference>
<dbReference type="PRINTS" id="PR01263">
    <property type="entry name" value="INTCLCHANNEL"/>
</dbReference>
<dbReference type="SFLD" id="SFLDS00019">
    <property type="entry name" value="Glutathione_Transferase_(cytos"/>
    <property type="match status" value="1"/>
</dbReference>
<dbReference type="SUPFAM" id="SSF47616">
    <property type="entry name" value="GST C-terminal domain-like"/>
    <property type="match status" value="1"/>
</dbReference>
<dbReference type="SUPFAM" id="SSF52833">
    <property type="entry name" value="Thioredoxin-like"/>
    <property type="match status" value="1"/>
</dbReference>
<dbReference type="PROSITE" id="PS50405">
    <property type="entry name" value="GST_CTER"/>
    <property type="match status" value="1"/>
</dbReference>
<dbReference type="PROSITE" id="PS50404">
    <property type="entry name" value="GST_NTER"/>
    <property type="match status" value="1"/>
</dbReference>
<evidence type="ECO:0000250" key="1"/>
<evidence type="ECO:0000250" key="2">
    <source>
        <dbReference type="UniProtKB" id="O95833"/>
    </source>
</evidence>
<evidence type="ECO:0000255" key="3"/>
<evidence type="ECO:0000255" key="4">
    <source>
        <dbReference type="PROSITE-ProRule" id="PRU00684"/>
    </source>
</evidence>
<evidence type="ECO:0000255" key="5">
    <source>
        <dbReference type="PROSITE-ProRule" id="PRU00685"/>
    </source>
</evidence>
<evidence type="ECO:0000305" key="6"/>
<evidence type="ECO:0000312" key="7">
    <source>
        <dbReference type="MGI" id="MGI:1916704"/>
    </source>
</evidence>